<sequence>MDVNEFDFDLPEELIAQTPLKTRTNSRLLVVDKKTKAISDRMFPDLIEALSPGDCLVLNDTKVMPARLLGEKVETKAVIELLLLKQLEGDCWETLVKPAKRVKIGTEVSFGDGKLTAICTAVQPQGGRIFEFRYSGVFYELLEELGTMPLPPYIKERLEDADRYQTVYAKQIGSAAAPTAGLHFSEQLLLEIEAKGVKIVYITLHVGLGTFRPVSASSVEDHQMHAEYYQVTEEAAHTLASARENGGNIIAVGTTSARTLETIYSDHGAFVAASGWTSIFIYPGYKYQAIDGLLTNFHLPKSTLVMLVSALIGKEALMDAYAHAIKERYRFFSFGDAMFIRP</sequence>
<organism>
    <name type="scientific">Shouchella clausii (strain KSM-K16)</name>
    <name type="common">Alkalihalobacillus clausii</name>
    <dbReference type="NCBI Taxonomy" id="66692"/>
    <lineage>
        <taxon>Bacteria</taxon>
        <taxon>Bacillati</taxon>
        <taxon>Bacillota</taxon>
        <taxon>Bacilli</taxon>
        <taxon>Bacillales</taxon>
        <taxon>Bacillaceae</taxon>
        <taxon>Shouchella</taxon>
    </lineage>
</organism>
<accession>Q5WHR3</accession>
<feature type="chain" id="PRO_0000231315" description="S-adenosylmethionine:tRNA ribosyltransferase-isomerase">
    <location>
        <begin position="1"/>
        <end position="342"/>
    </location>
</feature>
<comment type="function">
    <text evidence="1">Transfers and isomerizes the ribose moiety from AdoMet to the 7-aminomethyl group of 7-deazaguanine (preQ1-tRNA) to give epoxyqueuosine (oQ-tRNA).</text>
</comment>
<comment type="catalytic activity">
    <reaction evidence="1">
        <text>7-aminomethyl-7-carbaguanosine(34) in tRNA + S-adenosyl-L-methionine = epoxyqueuosine(34) in tRNA + adenine + L-methionine + 2 H(+)</text>
        <dbReference type="Rhea" id="RHEA:32155"/>
        <dbReference type="Rhea" id="RHEA-COMP:10342"/>
        <dbReference type="Rhea" id="RHEA-COMP:18582"/>
        <dbReference type="ChEBI" id="CHEBI:15378"/>
        <dbReference type="ChEBI" id="CHEBI:16708"/>
        <dbReference type="ChEBI" id="CHEBI:57844"/>
        <dbReference type="ChEBI" id="CHEBI:59789"/>
        <dbReference type="ChEBI" id="CHEBI:82833"/>
        <dbReference type="ChEBI" id="CHEBI:194443"/>
        <dbReference type="EC" id="2.4.99.17"/>
    </reaction>
</comment>
<comment type="pathway">
    <text evidence="1">tRNA modification; tRNA-queuosine biosynthesis.</text>
</comment>
<comment type="subunit">
    <text evidence="1">Monomer.</text>
</comment>
<comment type="subcellular location">
    <subcellularLocation>
        <location evidence="1">Cytoplasm</location>
    </subcellularLocation>
</comment>
<comment type="similarity">
    <text evidence="1">Belongs to the QueA family.</text>
</comment>
<proteinExistence type="inferred from homology"/>
<name>QUEA_SHOC1</name>
<evidence type="ECO:0000255" key="1">
    <source>
        <dbReference type="HAMAP-Rule" id="MF_00113"/>
    </source>
</evidence>
<protein>
    <recommendedName>
        <fullName evidence="1">S-adenosylmethionine:tRNA ribosyltransferase-isomerase</fullName>
        <ecNumber evidence="1">2.4.99.17</ecNumber>
    </recommendedName>
    <alternativeName>
        <fullName evidence="1">Queuosine biosynthesis protein QueA</fullName>
    </alternativeName>
</protein>
<gene>
    <name evidence="1" type="primary">queA</name>
    <name type="ordered locus">ABC1557</name>
</gene>
<dbReference type="EC" id="2.4.99.17" evidence="1"/>
<dbReference type="EMBL" id="AP006627">
    <property type="protein sequence ID" value="BAD64092.1"/>
    <property type="molecule type" value="Genomic_DNA"/>
</dbReference>
<dbReference type="RefSeq" id="WP_011246401.1">
    <property type="nucleotide sequence ID" value="NC_006582.1"/>
</dbReference>
<dbReference type="SMR" id="Q5WHR3"/>
<dbReference type="STRING" id="66692.ABC1557"/>
<dbReference type="KEGG" id="bcl:ABC1557"/>
<dbReference type="eggNOG" id="COG0809">
    <property type="taxonomic scope" value="Bacteria"/>
</dbReference>
<dbReference type="HOGENOM" id="CLU_039110_1_0_9"/>
<dbReference type="OrthoDB" id="9805933at2"/>
<dbReference type="UniPathway" id="UPA00392"/>
<dbReference type="Proteomes" id="UP000001168">
    <property type="component" value="Chromosome"/>
</dbReference>
<dbReference type="GO" id="GO:0005737">
    <property type="term" value="C:cytoplasm"/>
    <property type="evidence" value="ECO:0007669"/>
    <property type="project" value="UniProtKB-SubCell"/>
</dbReference>
<dbReference type="GO" id="GO:0051075">
    <property type="term" value="F:S-adenosylmethionine:tRNA ribosyltransferase-isomerase activity"/>
    <property type="evidence" value="ECO:0007669"/>
    <property type="project" value="UniProtKB-EC"/>
</dbReference>
<dbReference type="GO" id="GO:0008616">
    <property type="term" value="P:queuosine biosynthetic process"/>
    <property type="evidence" value="ECO:0007669"/>
    <property type="project" value="UniProtKB-UniRule"/>
</dbReference>
<dbReference type="GO" id="GO:0002099">
    <property type="term" value="P:tRNA wobble guanine modification"/>
    <property type="evidence" value="ECO:0007669"/>
    <property type="project" value="TreeGrafter"/>
</dbReference>
<dbReference type="FunFam" id="2.40.10.240:FF:000002">
    <property type="entry name" value="S-adenosylmethionine:tRNA ribosyltransferase-isomerase"/>
    <property type="match status" value="1"/>
</dbReference>
<dbReference type="FunFam" id="3.40.1780.10:FF:000001">
    <property type="entry name" value="S-adenosylmethionine:tRNA ribosyltransferase-isomerase"/>
    <property type="match status" value="1"/>
</dbReference>
<dbReference type="Gene3D" id="2.40.10.240">
    <property type="entry name" value="QueA-like"/>
    <property type="match status" value="1"/>
</dbReference>
<dbReference type="Gene3D" id="3.40.1780.10">
    <property type="entry name" value="QueA-like"/>
    <property type="match status" value="1"/>
</dbReference>
<dbReference type="HAMAP" id="MF_00113">
    <property type="entry name" value="QueA"/>
    <property type="match status" value="1"/>
</dbReference>
<dbReference type="InterPro" id="IPR003699">
    <property type="entry name" value="QueA"/>
</dbReference>
<dbReference type="InterPro" id="IPR042118">
    <property type="entry name" value="QueA_dom1"/>
</dbReference>
<dbReference type="InterPro" id="IPR042119">
    <property type="entry name" value="QueA_dom2"/>
</dbReference>
<dbReference type="InterPro" id="IPR036100">
    <property type="entry name" value="QueA_sf"/>
</dbReference>
<dbReference type="NCBIfam" id="NF001140">
    <property type="entry name" value="PRK00147.1"/>
    <property type="match status" value="1"/>
</dbReference>
<dbReference type="NCBIfam" id="TIGR00113">
    <property type="entry name" value="queA"/>
    <property type="match status" value="1"/>
</dbReference>
<dbReference type="PANTHER" id="PTHR30307">
    <property type="entry name" value="S-ADENOSYLMETHIONINE:TRNA RIBOSYLTRANSFERASE-ISOMERASE"/>
    <property type="match status" value="1"/>
</dbReference>
<dbReference type="PANTHER" id="PTHR30307:SF0">
    <property type="entry name" value="S-ADENOSYLMETHIONINE:TRNA RIBOSYLTRANSFERASE-ISOMERASE"/>
    <property type="match status" value="1"/>
</dbReference>
<dbReference type="Pfam" id="PF02547">
    <property type="entry name" value="Queuosine_synth"/>
    <property type="match status" value="1"/>
</dbReference>
<dbReference type="SUPFAM" id="SSF111337">
    <property type="entry name" value="QueA-like"/>
    <property type="match status" value="1"/>
</dbReference>
<reference key="1">
    <citation type="submission" date="2003-10" db="EMBL/GenBank/DDBJ databases">
        <title>The complete genome sequence of the alkaliphilic Bacillus clausii KSM-K16.</title>
        <authorList>
            <person name="Takaki Y."/>
            <person name="Kageyama Y."/>
            <person name="Shimamura S."/>
            <person name="Suzuki H."/>
            <person name="Nishi S."/>
            <person name="Hatada Y."/>
            <person name="Kawai S."/>
            <person name="Ito S."/>
            <person name="Horikoshi K."/>
        </authorList>
    </citation>
    <scope>NUCLEOTIDE SEQUENCE [LARGE SCALE GENOMIC DNA]</scope>
    <source>
        <strain>KSM-K16</strain>
    </source>
</reference>
<keyword id="KW-0963">Cytoplasm</keyword>
<keyword id="KW-0671">Queuosine biosynthesis</keyword>
<keyword id="KW-1185">Reference proteome</keyword>
<keyword id="KW-0949">S-adenosyl-L-methionine</keyword>
<keyword id="KW-0808">Transferase</keyword>